<keyword id="KW-0004">4Fe-4S</keyword>
<keyword id="KW-0408">Iron</keyword>
<keyword id="KW-0411">Iron-sulfur</keyword>
<keyword id="KW-0479">Metal-binding</keyword>
<organism>
    <name type="scientific">Yersinia pestis bv. Antiqua (strain Nepal516)</name>
    <dbReference type="NCBI Taxonomy" id="377628"/>
    <lineage>
        <taxon>Bacteria</taxon>
        <taxon>Pseudomonadati</taxon>
        <taxon>Pseudomonadota</taxon>
        <taxon>Gammaproteobacteria</taxon>
        <taxon>Enterobacterales</taxon>
        <taxon>Yersiniaceae</taxon>
        <taxon>Yersinia</taxon>
    </lineage>
</organism>
<feature type="chain" id="PRO_0000268249" description="Fe/S biogenesis protein NfuA">
    <location>
        <begin position="1"/>
        <end position="191"/>
    </location>
</feature>
<feature type="binding site" evidence="1">
    <location>
        <position position="149"/>
    </location>
    <ligand>
        <name>[4Fe-4S] cluster</name>
        <dbReference type="ChEBI" id="CHEBI:49883"/>
    </ligand>
</feature>
<feature type="binding site" evidence="1">
    <location>
        <position position="152"/>
    </location>
    <ligand>
        <name>[4Fe-4S] cluster</name>
        <dbReference type="ChEBI" id="CHEBI:49883"/>
    </ligand>
</feature>
<gene>
    <name evidence="1" type="primary">nfuA</name>
    <name type="ordered locus">YPN_3938</name>
    <name type="ORF">YP516_4469</name>
</gene>
<sequence length="191" mass="21004">MITITDAAQSHFAKLLANQEEGTQIRVFVINPGTPTAECGVSYCPPDAVEATDTELKFEQLSAYVDELSVPYLQDAEIDFVTDQLGSQLTLKAPNAKMRKVDDSAPLMERVEYVLQSQINPQLAGHGGRVTLMEITPEGLAILQFGGGCNGCSMVDVTLKEGIEKELLQKFPELKGVRDLTEHQRGEHSYY</sequence>
<proteinExistence type="inferred from homology"/>
<reference key="1">
    <citation type="journal article" date="2006" name="J. Bacteriol.">
        <title>Complete genome sequence of Yersinia pestis strains Antiqua and Nepal516: evidence of gene reduction in an emerging pathogen.</title>
        <authorList>
            <person name="Chain P.S.G."/>
            <person name="Hu P."/>
            <person name="Malfatti S.A."/>
            <person name="Radnedge L."/>
            <person name="Larimer F."/>
            <person name="Vergez L.M."/>
            <person name="Worsham P."/>
            <person name="Chu M.C."/>
            <person name="Andersen G.L."/>
        </authorList>
    </citation>
    <scope>NUCLEOTIDE SEQUENCE [LARGE SCALE GENOMIC DNA]</scope>
    <source>
        <strain>Nepal516</strain>
    </source>
</reference>
<reference key="2">
    <citation type="submission" date="2009-04" db="EMBL/GenBank/DDBJ databases">
        <title>Yersinia pestis Nepal516A whole genome shotgun sequencing project.</title>
        <authorList>
            <person name="Plunkett G. III"/>
            <person name="Anderson B.D."/>
            <person name="Baumler D.J."/>
            <person name="Burland V."/>
            <person name="Cabot E.L."/>
            <person name="Glasner J.D."/>
            <person name="Mau B."/>
            <person name="Neeno-Eckwall E."/>
            <person name="Perna N.T."/>
            <person name="Munk A.C."/>
            <person name="Tapia R."/>
            <person name="Green L.D."/>
            <person name="Rogers Y.C."/>
            <person name="Detter J.C."/>
            <person name="Bruce D.C."/>
            <person name="Brettin T.S."/>
        </authorList>
    </citation>
    <scope>NUCLEOTIDE SEQUENCE [LARGE SCALE GENOMIC DNA]</scope>
    <source>
        <strain>Nepal516</strain>
    </source>
</reference>
<name>NFUA_YERPN</name>
<protein>
    <recommendedName>
        <fullName evidence="1">Fe/S biogenesis protein NfuA</fullName>
    </recommendedName>
</protein>
<comment type="function">
    <text evidence="1">Involved in iron-sulfur cluster biogenesis. Binds a 4Fe-4S cluster, can transfer this cluster to apoproteins, and thereby intervenes in the maturation of Fe/S proteins. Could also act as a scaffold/chaperone for damaged Fe/S proteins.</text>
</comment>
<comment type="cofactor">
    <cofactor evidence="1">
        <name>[4Fe-4S] cluster</name>
        <dbReference type="ChEBI" id="CHEBI:49883"/>
    </cofactor>
    <text evidence="1">Binds 1 [4Fe-4S] cluster per subunit. The cluster is presumably bound at the interface of two monomers.</text>
</comment>
<comment type="subunit">
    <text evidence="1">Homodimer.</text>
</comment>
<comment type="similarity">
    <text evidence="1">Belongs to the NfuA family.</text>
</comment>
<dbReference type="EMBL" id="CP000305">
    <property type="protein sequence ID" value="ABG20265.1"/>
    <property type="molecule type" value="Genomic_DNA"/>
</dbReference>
<dbReference type="EMBL" id="ACNQ01000019">
    <property type="protein sequence ID" value="EEO74859.1"/>
    <property type="molecule type" value="Genomic_DNA"/>
</dbReference>
<dbReference type="RefSeq" id="WP_002208924.1">
    <property type="nucleotide sequence ID" value="NZ_ACNQ01000019.1"/>
</dbReference>
<dbReference type="SMR" id="Q1CCL5"/>
<dbReference type="GeneID" id="57974473"/>
<dbReference type="KEGG" id="ypn:YPN_3938"/>
<dbReference type="HOGENOM" id="CLU_094569_0_0_6"/>
<dbReference type="Proteomes" id="UP000008936">
    <property type="component" value="Chromosome"/>
</dbReference>
<dbReference type="GO" id="GO:0051539">
    <property type="term" value="F:4 iron, 4 sulfur cluster binding"/>
    <property type="evidence" value="ECO:0007669"/>
    <property type="project" value="UniProtKB-UniRule"/>
</dbReference>
<dbReference type="GO" id="GO:0005506">
    <property type="term" value="F:iron ion binding"/>
    <property type="evidence" value="ECO:0007669"/>
    <property type="project" value="InterPro"/>
</dbReference>
<dbReference type="GO" id="GO:0016226">
    <property type="term" value="P:iron-sulfur cluster assembly"/>
    <property type="evidence" value="ECO:0007669"/>
    <property type="project" value="UniProtKB-UniRule"/>
</dbReference>
<dbReference type="GO" id="GO:0051604">
    <property type="term" value="P:protein maturation"/>
    <property type="evidence" value="ECO:0007669"/>
    <property type="project" value="UniProtKB-UniRule"/>
</dbReference>
<dbReference type="Gene3D" id="3.30.300.130">
    <property type="entry name" value="Fe-S cluster assembly (FSCA)"/>
    <property type="match status" value="1"/>
</dbReference>
<dbReference type="Gene3D" id="2.60.300.12">
    <property type="entry name" value="HesB-like domain"/>
    <property type="match status" value="1"/>
</dbReference>
<dbReference type="HAMAP" id="MF_01637">
    <property type="entry name" value="Fe_S_biogen_NfuA"/>
    <property type="match status" value="1"/>
</dbReference>
<dbReference type="InterPro" id="IPR017726">
    <property type="entry name" value="Fe/S_biogenesis_protein_NfuA"/>
</dbReference>
<dbReference type="InterPro" id="IPR000361">
    <property type="entry name" value="FeS_biogenesis"/>
</dbReference>
<dbReference type="InterPro" id="IPR034904">
    <property type="entry name" value="FSCA_dom_sf"/>
</dbReference>
<dbReference type="InterPro" id="IPR035903">
    <property type="entry name" value="HesB-like_dom_sf"/>
</dbReference>
<dbReference type="InterPro" id="IPR001075">
    <property type="entry name" value="NIF_FeS_clus_asmbl_NifU_C"/>
</dbReference>
<dbReference type="NCBIfam" id="NF008392">
    <property type="entry name" value="PRK11190.1"/>
    <property type="match status" value="1"/>
</dbReference>
<dbReference type="NCBIfam" id="TIGR03341">
    <property type="entry name" value="YhgI_GntY"/>
    <property type="match status" value="1"/>
</dbReference>
<dbReference type="PANTHER" id="PTHR11178:SF51">
    <property type="entry name" value="FE_S BIOGENESIS PROTEIN NFUA"/>
    <property type="match status" value="1"/>
</dbReference>
<dbReference type="PANTHER" id="PTHR11178">
    <property type="entry name" value="IRON-SULFUR CLUSTER SCAFFOLD PROTEIN NFU-RELATED"/>
    <property type="match status" value="1"/>
</dbReference>
<dbReference type="Pfam" id="PF01521">
    <property type="entry name" value="Fe-S_biosyn"/>
    <property type="match status" value="1"/>
</dbReference>
<dbReference type="Pfam" id="PF01106">
    <property type="entry name" value="NifU"/>
    <property type="match status" value="1"/>
</dbReference>
<dbReference type="SUPFAM" id="SSF117916">
    <property type="entry name" value="Fe-S cluster assembly (FSCA) domain-like"/>
    <property type="match status" value="1"/>
</dbReference>
<dbReference type="SUPFAM" id="SSF89360">
    <property type="entry name" value="HesB-like domain"/>
    <property type="match status" value="1"/>
</dbReference>
<accession>Q1CCL5</accession>
<accession>D1Q2V6</accession>
<evidence type="ECO:0000255" key="1">
    <source>
        <dbReference type="HAMAP-Rule" id="MF_01637"/>
    </source>
</evidence>